<reference key="1">
    <citation type="journal article" date="2014" name="Plant J.">
        <title>The plant glycosyltransferase clone collection for functional genomics.</title>
        <authorList>
            <person name="Lao J."/>
            <person name="Oikawa A."/>
            <person name="Bromley J.R."/>
            <person name="McInerney P."/>
            <person name="Suttangkakul A."/>
            <person name="Smith-Moritz A.M."/>
            <person name="Plahar H."/>
            <person name="Chiu T.-Y."/>
            <person name="Gonzalez Fernandez-Nino S.M.G."/>
            <person name="Ebert B."/>
            <person name="Yang F."/>
            <person name="Christiansen K.M."/>
            <person name="Hansen S.F."/>
            <person name="Stonebloom S."/>
            <person name="Adams P.D."/>
            <person name="Ronald P.C."/>
            <person name="Hillson N.J."/>
            <person name="Hadi M.Z."/>
            <person name="Vega-Sanchez M.E."/>
            <person name="Loque D."/>
            <person name="Scheller H.V."/>
            <person name="Heazlewood J.L."/>
        </authorList>
    </citation>
    <scope>NUCLEOTIDE SEQUENCE [MRNA]</scope>
    <source>
        <strain>cv. Columbia</strain>
    </source>
</reference>
<reference key="2">
    <citation type="journal article" date="1999" name="Nature">
        <title>Sequence and analysis of chromosome 2 of the plant Arabidopsis thaliana.</title>
        <authorList>
            <person name="Lin X."/>
            <person name="Kaul S."/>
            <person name="Rounsley S.D."/>
            <person name="Shea T.P."/>
            <person name="Benito M.-I."/>
            <person name="Town C.D."/>
            <person name="Fujii C.Y."/>
            <person name="Mason T.M."/>
            <person name="Bowman C.L."/>
            <person name="Barnstead M.E."/>
            <person name="Feldblyum T.V."/>
            <person name="Buell C.R."/>
            <person name="Ketchum K.A."/>
            <person name="Lee J.J."/>
            <person name="Ronning C.M."/>
            <person name="Koo H.L."/>
            <person name="Moffat K.S."/>
            <person name="Cronin L.A."/>
            <person name="Shen M."/>
            <person name="Pai G."/>
            <person name="Van Aken S."/>
            <person name="Umayam L."/>
            <person name="Tallon L.J."/>
            <person name="Gill J.E."/>
            <person name="Adams M.D."/>
            <person name="Carrera A.J."/>
            <person name="Creasy T.H."/>
            <person name="Goodman H.M."/>
            <person name="Somerville C.R."/>
            <person name="Copenhaver G.P."/>
            <person name="Preuss D."/>
            <person name="Nierman W.C."/>
            <person name="White O."/>
            <person name="Eisen J.A."/>
            <person name="Salzberg S.L."/>
            <person name="Fraser C.M."/>
            <person name="Venter J.C."/>
        </authorList>
    </citation>
    <scope>NUCLEOTIDE SEQUENCE [LARGE SCALE GENOMIC DNA]</scope>
    <source>
        <strain>cv. Columbia</strain>
    </source>
</reference>
<reference key="3">
    <citation type="journal article" date="2017" name="Plant J.">
        <title>Araport11: a complete reannotation of the Arabidopsis thaliana reference genome.</title>
        <authorList>
            <person name="Cheng C.Y."/>
            <person name="Krishnakumar V."/>
            <person name="Chan A.P."/>
            <person name="Thibaud-Nissen F."/>
            <person name="Schobel S."/>
            <person name="Town C.D."/>
        </authorList>
    </citation>
    <scope>GENOME REANNOTATION</scope>
    <source>
        <strain>cv. Columbia</strain>
    </source>
</reference>
<reference key="4">
    <citation type="journal article" date="2014" name="Plant Signal. Behav.">
        <title>Arabidopsis thaliana glucuronosyltransferase in family GT14.</title>
        <authorList>
            <person name="Dilokpimol A."/>
            <person name="Geshi N."/>
        </authorList>
    </citation>
    <scope>FUNCTION</scope>
</reference>
<evidence type="ECO:0000250" key="1">
    <source>
        <dbReference type="UniProtKB" id="Q9FLD7"/>
    </source>
</evidence>
<evidence type="ECO:0000255" key="2"/>
<evidence type="ECO:0000255" key="3">
    <source>
        <dbReference type="PROSITE-ProRule" id="PRU00498"/>
    </source>
</evidence>
<evidence type="ECO:0000269" key="4">
    <source>
    </source>
</evidence>
<evidence type="ECO:0000303" key="5">
    <source>
    </source>
</evidence>
<evidence type="ECO:0000305" key="6"/>
<evidence type="ECO:0000312" key="7">
    <source>
        <dbReference type="Araport" id="AT2G37585"/>
    </source>
</evidence>
<gene>
    <name evidence="5" type="primary">GLCAT14C</name>
    <name evidence="7" type="ordered locus">At2g37585</name>
</gene>
<sequence length="384" mass="44459">MKRSHISSPRSYSRPAISIFGVFLLFLLVLTLSSRKPSDSSSGLAPNRNLATKSTIPRFAYLVTGTKGDGKRVKRLLKAIHHPRNYYLLHLDLEASDEERMELAKYVRSEKKKFENVMVMGLADLVTEKGPTMLASTLHGVAILLKKAKDWDWFINLSASDYPLMPQDDILHIFSYLPRYLNFIEHTSNIGWKENQRARPIIIDPGFYHLKKSGVFWAKERRSLPASFKLFMGSTSVALTRPFLEFCIWGWDNLPRTLLMYYTNFLLSSEGYFQTVVCNNKDYQNTTVNHDLHYTKWDPLQQRTLNVTVENFRDMVQSGAPFAREFREDDLVLDKIDIELLGQTDTGLELKTPDVVKPTVSWKRLEKLMVRLLDHENFRAKQCK</sequence>
<accession>Q8S8P3</accession>
<protein>
    <recommendedName>
        <fullName evidence="6">Beta-glucuronosyltransferase GlcAT14C</fullName>
        <ecNumber evidence="6">2.4.1.-</ecNumber>
    </recommendedName>
    <alternativeName>
        <fullName evidence="6">GT14 family glucuronic acid transferase 3</fullName>
        <shortName evidence="5">AtGlcAT14C</shortName>
    </alternativeName>
</protein>
<keyword id="KW-0325">Glycoprotein</keyword>
<keyword id="KW-0328">Glycosyltransferase</keyword>
<keyword id="KW-0333">Golgi apparatus</keyword>
<keyword id="KW-0472">Membrane</keyword>
<keyword id="KW-1185">Reference proteome</keyword>
<keyword id="KW-0735">Signal-anchor</keyword>
<keyword id="KW-0808">Transferase</keyword>
<keyword id="KW-0812">Transmembrane</keyword>
<keyword id="KW-1133">Transmembrane helix</keyword>
<proteinExistence type="evidence at transcript level"/>
<comment type="function">
    <text evidence="4">Beta-glucuronosyltransferase involved in the biosynthesis of type II arabinogalactan (AG). Modifies both the beta-1,6-linked galactan and beta-1,3-linked galactan present in type II AG.</text>
</comment>
<comment type="subcellular location">
    <subcellularLocation>
        <location evidence="1">Golgi apparatus membrane</location>
        <topology evidence="6">Single-pass type II membrane protein</topology>
    </subcellularLocation>
</comment>
<comment type="similarity">
    <text evidence="6">Belongs to the glycosyltransferase 14 family.</text>
</comment>
<organism>
    <name type="scientific">Arabidopsis thaliana</name>
    <name type="common">Mouse-ear cress</name>
    <dbReference type="NCBI Taxonomy" id="3702"/>
    <lineage>
        <taxon>Eukaryota</taxon>
        <taxon>Viridiplantae</taxon>
        <taxon>Streptophyta</taxon>
        <taxon>Embryophyta</taxon>
        <taxon>Tracheophyta</taxon>
        <taxon>Spermatophyta</taxon>
        <taxon>Magnoliopsida</taxon>
        <taxon>eudicotyledons</taxon>
        <taxon>Gunneridae</taxon>
        <taxon>Pentapetalae</taxon>
        <taxon>rosids</taxon>
        <taxon>malvids</taxon>
        <taxon>Brassicales</taxon>
        <taxon>Brassicaceae</taxon>
        <taxon>Camelineae</taxon>
        <taxon>Arabidopsis</taxon>
    </lineage>
</organism>
<name>GT14C_ARATH</name>
<feature type="chain" id="PRO_0000434322" description="Beta-glucuronosyltransferase GlcAT14C">
    <location>
        <begin position="1"/>
        <end position="384"/>
    </location>
</feature>
<feature type="topological domain" description="Cytoplasmic" evidence="6">
    <location>
        <begin position="1"/>
        <end position="11"/>
    </location>
</feature>
<feature type="transmembrane region" description="Signal-anchor for type II membrane protein" evidence="2">
    <location>
        <begin position="12"/>
        <end position="34"/>
    </location>
</feature>
<feature type="topological domain" description="Lumenal" evidence="6">
    <location>
        <begin position="35"/>
        <end position="384"/>
    </location>
</feature>
<feature type="glycosylation site" description="N-linked (GlcNAc...) asparagine" evidence="3">
    <location>
        <position position="156"/>
    </location>
</feature>
<feature type="glycosylation site" description="N-linked (GlcNAc...) asparagine" evidence="3">
    <location>
        <position position="285"/>
    </location>
</feature>
<feature type="glycosylation site" description="N-linked (GlcNAc...) asparagine" evidence="3">
    <location>
        <position position="306"/>
    </location>
</feature>
<dbReference type="EC" id="2.4.1.-" evidence="6"/>
<dbReference type="EMBL" id="KJ138862">
    <property type="protein sequence ID" value="AHL38802.1"/>
    <property type="molecule type" value="mRNA"/>
</dbReference>
<dbReference type="EMBL" id="AC004684">
    <property type="protein sequence ID" value="AAM14996.1"/>
    <property type="molecule type" value="Genomic_DNA"/>
</dbReference>
<dbReference type="EMBL" id="CP002685">
    <property type="protein sequence ID" value="AEC09421.1"/>
    <property type="molecule type" value="Genomic_DNA"/>
</dbReference>
<dbReference type="RefSeq" id="NP_565866.1">
    <property type="nucleotide sequence ID" value="NM_129314.3"/>
</dbReference>
<dbReference type="SMR" id="Q8S8P3"/>
<dbReference type="FunCoup" id="Q8S8P3">
    <property type="interactions" value="34"/>
</dbReference>
<dbReference type="STRING" id="3702.Q8S8P3"/>
<dbReference type="CAZy" id="GT14">
    <property type="family name" value="Glycosyltransferase Family 14"/>
</dbReference>
<dbReference type="GlyCosmos" id="Q8S8P3">
    <property type="glycosylation" value="3 sites, No reported glycans"/>
</dbReference>
<dbReference type="GlyGen" id="Q8S8P3">
    <property type="glycosylation" value="3 sites"/>
</dbReference>
<dbReference type="iPTMnet" id="Q8S8P3"/>
<dbReference type="PaxDb" id="3702-AT2G37585.1"/>
<dbReference type="ProteomicsDB" id="247137"/>
<dbReference type="EnsemblPlants" id="AT2G37585.1">
    <property type="protein sequence ID" value="AT2G37585.1"/>
    <property type="gene ID" value="AT2G37585"/>
</dbReference>
<dbReference type="GeneID" id="818335"/>
<dbReference type="Gramene" id="AT2G37585.1">
    <property type="protein sequence ID" value="AT2G37585.1"/>
    <property type="gene ID" value="AT2G37585"/>
</dbReference>
<dbReference type="KEGG" id="ath:AT2G37585"/>
<dbReference type="Araport" id="AT2G37585"/>
<dbReference type="TAIR" id="AT2G37585">
    <property type="gene designation" value="GLCAT14C"/>
</dbReference>
<dbReference type="eggNOG" id="KOG0799">
    <property type="taxonomic scope" value="Eukaryota"/>
</dbReference>
<dbReference type="HOGENOM" id="CLU_034994_0_0_1"/>
<dbReference type="InParanoid" id="Q8S8P3"/>
<dbReference type="OMA" id="MVIGNAD"/>
<dbReference type="PhylomeDB" id="Q8S8P3"/>
<dbReference type="PRO" id="PR:Q8S8P3"/>
<dbReference type="Proteomes" id="UP000006548">
    <property type="component" value="Chromosome 2"/>
</dbReference>
<dbReference type="ExpressionAtlas" id="Q8S8P3">
    <property type="expression patterns" value="baseline and differential"/>
</dbReference>
<dbReference type="GO" id="GO:0000139">
    <property type="term" value="C:Golgi membrane"/>
    <property type="evidence" value="ECO:0007669"/>
    <property type="project" value="UniProtKB-SubCell"/>
</dbReference>
<dbReference type="GO" id="GO:0015020">
    <property type="term" value="F:glucuronosyltransferase activity"/>
    <property type="evidence" value="ECO:0000314"/>
    <property type="project" value="TAIR"/>
</dbReference>
<dbReference type="InterPro" id="IPR044610">
    <property type="entry name" value="GLCAT14A/B/C"/>
</dbReference>
<dbReference type="InterPro" id="IPR003406">
    <property type="entry name" value="Glyco_trans_14"/>
</dbReference>
<dbReference type="PANTHER" id="PTHR45719:SF8">
    <property type="entry name" value="BETA-GLUCURONOSYLTRANSFERASE GLCAT14C"/>
    <property type="match status" value="1"/>
</dbReference>
<dbReference type="PANTHER" id="PTHR45719">
    <property type="entry name" value="GLYCOSYLTRANSFERASE"/>
    <property type="match status" value="1"/>
</dbReference>
<dbReference type="Pfam" id="PF02485">
    <property type="entry name" value="Branch"/>
    <property type="match status" value="1"/>
</dbReference>